<gene>
    <name evidence="1" type="primary">rpoB</name>
</gene>
<reference key="1">
    <citation type="journal article" date="1997" name="Proc. Natl. Acad. Sci. U.S.A.">
        <title>Complete nucleotide sequence of the chloroplast genome from the green alga Chlorella vulgaris: the existence of genes possibly involved in chloroplast division.</title>
        <authorList>
            <person name="Wakasugi T."/>
            <person name="Nagai T."/>
            <person name="Kapoor M."/>
            <person name="Sugita M."/>
            <person name="Ito M."/>
            <person name="Ito S."/>
            <person name="Tsudzuki J."/>
            <person name="Nakashima K."/>
            <person name="Tsudzuki T."/>
            <person name="Suzuki Y."/>
            <person name="Hamada A."/>
            <person name="Ohta T."/>
            <person name="Inamura A."/>
            <person name="Yoshinaga K."/>
            <person name="Sugiura M."/>
        </authorList>
    </citation>
    <scope>NUCLEOTIDE SEQUENCE [LARGE SCALE GENOMIC DNA]</scope>
    <source>
        <strain>IAM C-27 / Tamiya</strain>
    </source>
</reference>
<protein>
    <recommendedName>
        <fullName evidence="1">DNA-directed RNA polymerase subunit beta</fullName>
        <ecNumber evidence="1">2.7.7.6</ecNumber>
    </recommendedName>
    <alternativeName>
        <fullName evidence="1">PEP</fullName>
    </alternativeName>
    <alternativeName>
        <fullName evidence="1">Plastid-encoded RNA polymerase subunit beta</fullName>
        <shortName evidence="1">RNA polymerase subunit beta</shortName>
    </alternativeName>
</protein>
<evidence type="ECO:0000255" key="1">
    <source>
        <dbReference type="HAMAP-Rule" id="MF_01321"/>
    </source>
</evidence>
<dbReference type="EC" id="2.7.7.6" evidence="1"/>
<dbReference type="EMBL" id="AB001684">
    <property type="protein sequence ID" value="BAA57969.1"/>
    <property type="molecule type" value="Genomic_DNA"/>
</dbReference>
<dbReference type="PIR" id="T07321">
    <property type="entry name" value="T07321"/>
</dbReference>
<dbReference type="RefSeq" id="NP_045893.1">
    <property type="nucleotide sequence ID" value="NC_001865.1"/>
</dbReference>
<dbReference type="SMR" id="P56299"/>
<dbReference type="GeneID" id="809111"/>
<dbReference type="GO" id="GO:0009507">
    <property type="term" value="C:chloroplast"/>
    <property type="evidence" value="ECO:0007669"/>
    <property type="project" value="UniProtKB-SubCell"/>
</dbReference>
<dbReference type="GO" id="GO:0000428">
    <property type="term" value="C:DNA-directed RNA polymerase complex"/>
    <property type="evidence" value="ECO:0007669"/>
    <property type="project" value="UniProtKB-KW"/>
</dbReference>
<dbReference type="GO" id="GO:0005739">
    <property type="term" value="C:mitochondrion"/>
    <property type="evidence" value="ECO:0007669"/>
    <property type="project" value="GOC"/>
</dbReference>
<dbReference type="GO" id="GO:0003677">
    <property type="term" value="F:DNA binding"/>
    <property type="evidence" value="ECO:0007669"/>
    <property type="project" value="UniProtKB-UniRule"/>
</dbReference>
<dbReference type="GO" id="GO:0003899">
    <property type="term" value="F:DNA-directed RNA polymerase activity"/>
    <property type="evidence" value="ECO:0007669"/>
    <property type="project" value="UniProtKB-UniRule"/>
</dbReference>
<dbReference type="GO" id="GO:0032549">
    <property type="term" value="F:ribonucleoside binding"/>
    <property type="evidence" value="ECO:0007669"/>
    <property type="project" value="InterPro"/>
</dbReference>
<dbReference type="GO" id="GO:0006351">
    <property type="term" value="P:DNA-templated transcription"/>
    <property type="evidence" value="ECO:0007669"/>
    <property type="project" value="UniProtKB-UniRule"/>
</dbReference>
<dbReference type="CDD" id="cd00653">
    <property type="entry name" value="RNA_pol_B_RPB2"/>
    <property type="match status" value="1"/>
</dbReference>
<dbReference type="Gene3D" id="2.40.50.100">
    <property type="match status" value="1"/>
</dbReference>
<dbReference type="Gene3D" id="3.90.1100.10">
    <property type="match status" value="2"/>
</dbReference>
<dbReference type="Gene3D" id="2.40.270.10">
    <property type="entry name" value="DNA-directed RNA polymerase, subunit 2, domain 6"/>
    <property type="match status" value="2"/>
</dbReference>
<dbReference type="Gene3D" id="3.90.1800.10">
    <property type="entry name" value="RNA polymerase alpha subunit dimerisation domain"/>
    <property type="match status" value="1"/>
</dbReference>
<dbReference type="Gene3D" id="3.90.1110.10">
    <property type="entry name" value="RNA polymerase Rpb2, domain 2"/>
    <property type="match status" value="1"/>
</dbReference>
<dbReference type="HAMAP" id="MF_01321">
    <property type="entry name" value="RNApol_bact_RpoB"/>
    <property type="match status" value="1"/>
</dbReference>
<dbReference type="InterPro" id="IPR015712">
    <property type="entry name" value="DNA-dir_RNA_pol_su2"/>
</dbReference>
<dbReference type="InterPro" id="IPR007120">
    <property type="entry name" value="DNA-dir_RNAP_su2_dom"/>
</dbReference>
<dbReference type="InterPro" id="IPR037033">
    <property type="entry name" value="DNA-dir_RNAP_su2_hyb_sf"/>
</dbReference>
<dbReference type="InterPro" id="IPR010243">
    <property type="entry name" value="RNA_pol_bsu_bac"/>
</dbReference>
<dbReference type="InterPro" id="IPR007121">
    <property type="entry name" value="RNA_pol_bsu_CS"/>
</dbReference>
<dbReference type="InterPro" id="IPR007642">
    <property type="entry name" value="RNA_pol_Rpb2_2"/>
</dbReference>
<dbReference type="InterPro" id="IPR037034">
    <property type="entry name" value="RNA_pol_Rpb2_2_sf"/>
</dbReference>
<dbReference type="InterPro" id="IPR007645">
    <property type="entry name" value="RNA_pol_Rpb2_3"/>
</dbReference>
<dbReference type="InterPro" id="IPR007641">
    <property type="entry name" value="RNA_pol_Rpb2_7"/>
</dbReference>
<dbReference type="PANTHER" id="PTHR20856">
    <property type="entry name" value="DNA-DIRECTED RNA POLYMERASE I SUBUNIT 2"/>
    <property type="match status" value="1"/>
</dbReference>
<dbReference type="Pfam" id="PF04561">
    <property type="entry name" value="RNA_pol_Rpb2_2"/>
    <property type="match status" value="1"/>
</dbReference>
<dbReference type="Pfam" id="PF04565">
    <property type="entry name" value="RNA_pol_Rpb2_3"/>
    <property type="match status" value="1"/>
</dbReference>
<dbReference type="Pfam" id="PF00562">
    <property type="entry name" value="RNA_pol_Rpb2_6"/>
    <property type="match status" value="1"/>
</dbReference>
<dbReference type="Pfam" id="PF04560">
    <property type="entry name" value="RNA_pol_Rpb2_7"/>
    <property type="match status" value="1"/>
</dbReference>
<dbReference type="SUPFAM" id="SSF64484">
    <property type="entry name" value="beta and beta-prime subunits of DNA dependent RNA-polymerase"/>
    <property type="match status" value="1"/>
</dbReference>
<dbReference type="PROSITE" id="PS01166">
    <property type="entry name" value="RNA_POL_BETA"/>
    <property type="match status" value="1"/>
</dbReference>
<sequence length="1301" mass="148422">MSYKKTLISKNFFFIKALNCSVSAGYVEKTGCKLPVQFSMEIPNLIDVQRQSFYSFIEYGLKEAFQKPLRFSTTKHDLEIRFFPEGIQFRKPDFTQKQAVVLGKIYGSAVYIPVGIHSKKSSTFRIEWLFVGILPIMTRQGHFVVNGVSRVVLHQMVRNPGIYTLPIHPRTKIGTLRIVPEKGGWIHITVDKKHRVWFLTRSLRRKVSLLIFLQAVGIPFHDIFLRLEHSKILQNSFVAELGEGSARHDDVLERAGLYAHPATQEEAWQYLYSHFKEYSPYAHKNLAAKEQTAREFFYSTLWNKDKLILGHIGRQQFREKIGSIEPLENTSLTREDLLEATQALLSLMHKKRVVDEIDSLTQKRIRGCDEFLLEHLATGMKEFELFFRRKVTFLPATKSITGAENPFRSLWRQNKAVFSKTVSKSWKRFFTSGTLGQFMDQTNSLAETTHKRRLTVLGPGGISGKQTTIQIRGIHPTYYGRLCPIETPEGKNAGLVNSFTVLSVLSKYGARTLTTPFYQVYKGQVQKTLPPLRVSPRQEYKLIEAPADIQLTAWNVLPKTHLPVRKELNFHSDVATRITTQSVGILQNISVATSLIPFLEHNDANRALMGSNMQRQAVPLLKPQAPLVGTGLESRVIGDVNHSMQASKTGFITKVSSTKIQVLSPRKTKAQVSVFSHVLFSLNKKKKKSLLNSEKQSFSKNGIFFIKTLQQKSNLKNIFFSAQKALYQENSSFDLKFEAQNRLFIPKMTFSLAQNFSRKIPFLSFFLKKKKERPRNPKKFFRSSDSFVNWKHKKLHSEDFRKNKVEITTTYSLIQYQRTNQSTCFSERPILPENEWVEKGDLLADGASSSQGKLSIGQNVLVAYLPWEGYNFEDAILISQRLVDQEIFTSLHMDHYDIAVQNTQYGLERITNLIPLKISDSTRDIYKMGNLDSRGLVEIGSWVEPGDYLVGKMSPLDPKSPPLQSPHEKLYNVILQREKTSFRNTSLRVPKGVQGFVLGVQILPSQEPDVAALAEKDEILRVRVLLLQRRKIQVGDKMAGRHGNKGIVSLILPRQDMPYLPDGTPVDIVLNPLGVPSRMNVGQILECLLGLAGHFLHERYTTYLFDEQYGAEASRSLVYSKLYQASLKTRNPWVFEPHHPGKIRVFDGRTGLTFDQPITAGYAYILKLVHLVDDKIHARPTGPYSAITQQPVKGRARNGGQRLGEMEVWALQAYGAAHTLHEFFTVKSDDLDGRQQAVLNIYANKPVTTGNPESFKLILRELQALCFNFQVYEKYSYYSEYTQKTRVSIFPISFIKLEDVL</sequence>
<organism>
    <name type="scientific">Chlorella vulgaris</name>
    <name type="common">Green alga</name>
    <dbReference type="NCBI Taxonomy" id="3077"/>
    <lineage>
        <taxon>Eukaryota</taxon>
        <taxon>Viridiplantae</taxon>
        <taxon>Chlorophyta</taxon>
        <taxon>core chlorophytes</taxon>
        <taxon>Trebouxiophyceae</taxon>
        <taxon>Chlorellales</taxon>
        <taxon>Chlorellaceae</taxon>
        <taxon>Chlorella clade</taxon>
        <taxon>Chlorella</taxon>
    </lineage>
</organism>
<proteinExistence type="inferred from homology"/>
<name>RPOB_CHLVU</name>
<accession>P56299</accession>
<keyword id="KW-0150">Chloroplast</keyword>
<keyword id="KW-0240">DNA-directed RNA polymerase</keyword>
<keyword id="KW-0548">Nucleotidyltransferase</keyword>
<keyword id="KW-0934">Plastid</keyword>
<keyword id="KW-0804">Transcription</keyword>
<keyword id="KW-0808">Transferase</keyword>
<geneLocation type="chloroplast"/>
<comment type="function">
    <text evidence="1">DNA-dependent RNA polymerase catalyzes the transcription of DNA into RNA using the four ribonucleoside triphosphates as substrates.</text>
</comment>
<comment type="catalytic activity">
    <reaction evidence="1">
        <text>RNA(n) + a ribonucleoside 5'-triphosphate = RNA(n+1) + diphosphate</text>
        <dbReference type="Rhea" id="RHEA:21248"/>
        <dbReference type="Rhea" id="RHEA-COMP:14527"/>
        <dbReference type="Rhea" id="RHEA-COMP:17342"/>
        <dbReference type="ChEBI" id="CHEBI:33019"/>
        <dbReference type="ChEBI" id="CHEBI:61557"/>
        <dbReference type="ChEBI" id="CHEBI:140395"/>
        <dbReference type="EC" id="2.7.7.6"/>
    </reaction>
</comment>
<comment type="subunit">
    <text evidence="1">In plastids the minimal PEP RNA polymerase catalytic core is composed of four subunits: alpha, beta, beta', and beta''. When a (nuclear-encoded) sigma factor is associated with the core the holoenzyme is formed, which can initiate transcription.</text>
</comment>
<comment type="subcellular location">
    <subcellularLocation>
        <location>Plastid</location>
        <location>Chloroplast</location>
    </subcellularLocation>
</comment>
<comment type="similarity">
    <text evidence="1">Belongs to the RNA polymerase beta chain family.</text>
</comment>
<feature type="chain" id="PRO_0000048018" description="DNA-directed RNA polymerase subunit beta">
    <location>
        <begin position="1"/>
        <end position="1301"/>
    </location>
</feature>